<dbReference type="EMBL" id="CR859855">
    <property type="protein sequence ID" value="CAH92012.1"/>
    <property type="molecule type" value="mRNA"/>
</dbReference>
<dbReference type="RefSeq" id="NP_001127495.1">
    <property type="nucleotide sequence ID" value="NM_001134023.1"/>
</dbReference>
<dbReference type="RefSeq" id="XP_009237801.1">
    <property type="nucleotide sequence ID" value="XM_009239526.1"/>
</dbReference>
<dbReference type="SMR" id="Q5R898"/>
<dbReference type="FunCoup" id="Q5R898">
    <property type="interactions" value="1989"/>
</dbReference>
<dbReference type="STRING" id="9601.ENSPPYP00000015978"/>
<dbReference type="Ensembl" id="ENSPPYT00000016618.3">
    <property type="protein sequence ID" value="ENSPPYP00000015978.2"/>
    <property type="gene ID" value="ENSPPYG00000014294.3"/>
</dbReference>
<dbReference type="GeneID" id="100174570"/>
<dbReference type="KEGG" id="pon:100174570"/>
<dbReference type="CTD" id="56648"/>
<dbReference type="eggNOG" id="KOG3271">
    <property type="taxonomic scope" value="Eukaryota"/>
</dbReference>
<dbReference type="GeneTree" id="ENSGT00390000003738"/>
<dbReference type="HOGENOM" id="CLU_102600_0_0_1"/>
<dbReference type="InParanoid" id="Q5R898"/>
<dbReference type="OMA" id="QIMDMET"/>
<dbReference type="OrthoDB" id="9975114at2759"/>
<dbReference type="TreeFam" id="TF101534"/>
<dbReference type="Proteomes" id="UP000001595">
    <property type="component" value="Chromosome 3"/>
</dbReference>
<dbReference type="GO" id="GO:0005789">
    <property type="term" value="C:endoplasmic reticulum membrane"/>
    <property type="evidence" value="ECO:0007669"/>
    <property type="project" value="UniProtKB-SubCell"/>
</dbReference>
<dbReference type="GO" id="GO:0005634">
    <property type="term" value="C:nucleus"/>
    <property type="evidence" value="ECO:0007669"/>
    <property type="project" value="UniProtKB-SubCell"/>
</dbReference>
<dbReference type="GO" id="GO:0043022">
    <property type="term" value="F:ribosome binding"/>
    <property type="evidence" value="ECO:0007669"/>
    <property type="project" value="InterPro"/>
</dbReference>
<dbReference type="GO" id="GO:0003723">
    <property type="term" value="F:RNA binding"/>
    <property type="evidence" value="ECO:0007669"/>
    <property type="project" value="UniProtKB-KW"/>
</dbReference>
<dbReference type="GO" id="GO:0003746">
    <property type="term" value="F:translation elongation factor activity"/>
    <property type="evidence" value="ECO:0007669"/>
    <property type="project" value="UniProtKB-KW"/>
</dbReference>
<dbReference type="GO" id="GO:0045901">
    <property type="term" value="P:positive regulation of translational elongation"/>
    <property type="evidence" value="ECO:0007669"/>
    <property type="project" value="InterPro"/>
</dbReference>
<dbReference type="GO" id="GO:0045905">
    <property type="term" value="P:positive regulation of translational termination"/>
    <property type="evidence" value="ECO:0007669"/>
    <property type="project" value="InterPro"/>
</dbReference>
<dbReference type="CDD" id="cd04468">
    <property type="entry name" value="S1_eIF5A"/>
    <property type="match status" value="1"/>
</dbReference>
<dbReference type="FunFam" id="2.30.30.30:FF:000007">
    <property type="entry name" value="Eukaryotic translation initiation factor 5A"/>
    <property type="match status" value="1"/>
</dbReference>
<dbReference type="FunFam" id="2.40.50.140:FF:000034">
    <property type="entry name" value="Eukaryotic translation initiation factor 5A"/>
    <property type="match status" value="1"/>
</dbReference>
<dbReference type="Gene3D" id="2.30.30.30">
    <property type="match status" value="1"/>
</dbReference>
<dbReference type="Gene3D" id="2.40.50.140">
    <property type="entry name" value="Nucleic acid-binding proteins"/>
    <property type="match status" value="1"/>
</dbReference>
<dbReference type="InterPro" id="IPR001884">
    <property type="entry name" value="IF5A-like"/>
</dbReference>
<dbReference type="InterPro" id="IPR048670">
    <property type="entry name" value="IF5A-like_N"/>
</dbReference>
<dbReference type="InterPro" id="IPR012340">
    <property type="entry name" value="NA-bd_OB-fold"/>
</dbReference>
<dbReference type="InterPro" id="IPR014722">
    <property type="entry name" value="Rib_uL2_dom2"/>
</dbReference>
<dbReference type="InterPro" id="IPR019769">
    <property type="entry name" value="Trans_elong_IF5A_hypusine_site"/>
</dbReference>
<dbReference type="InterPro" id="IPR020189">
    <property type="entry name" value="Transl_elong_IF5A_C"/>
</dbReference>
<dbReference type="InterPro" id="IPR008991">
    <property type="entry name" value="Translation_prot_SH3-like_sf"/>
</dbReference>
<dbReference type="NCBIfam" id="TIGR00037">
    <property type="entry name" value="eIF_5A"/>
    <property type="match status" value="1"/>
</dbReference>
<dbReference type="PANTHER" id="PTHR11673">
    <property type="entry name" value="TRANSLATION INITIATION FACTOR 5A FAMILY MEMBER"/>
    <property type="match status" value="1"/>
</dbReference>
<dbReference type="Pfam" id="PF01287">
    <property type="entry name" value="eIF-5a"/>
    <property type="match status" value="1"/>
</dbReference>
<dbReference type="Pfam" id="PF21485">
    <property type="entry name" value="IF5A-like_N"/>
    <property type="match status" value="1"/>
</dbReference>
<dbReference type="PIRSF" id="PIRSF003025">
    <property type="entry name" value="eIF5A"/>
    <property type="match status" value="1"/>
</dbReference>
<dbReference type="SMART" id="SM01376">
    <property type="entry name" value="eIF-5a"/>
    <property type="match status" value="1"/>
</dbReference>
<dbReference type="SUPFAM" id="SSF50249">
    <property type="entry name" value="Nucleic acid-binding proteins"/>
    <property type="match status" value="1"/>
</dbReference>
<dbReference type="SUPFAM" id="SSF50104">
    <property type="entry name" value="Translation proteins SH3-like domain"/>
    <property type="match status" value="1"/>
</dbReference>
<dbReference type="PROSITE" id="PS00302">
    <property type="entry name" value="IF5A_HYPUSINE"/>
    <property type="match status" value="1"/>
</dbReference>
<proteinExistence type="evidence at transcript level"/>
<gene>
    <name type="primary">EIF5A2</name>
</gene>
<accession>Q5R898</accession>
<organism>
    <name type="scientific">Pongo abelii</name>
    <name type="common">Sumatran orangutan</name>
    <name type="synonym">Pongo pygmaeus abelii</name>
    <dbReference type="NCBI Taxonomy" id="9601"/>
    <lineage>
        <taxon>Eukaryota</taxon>
        <taxon>Metazoa</taxon>
        <taxon>Chordata</taxon>
        <taxon>Craniata</taxon>
        <taxon>Vertebrata</taxon>
        <taxon>Euteleostomi</taxon>
        <taxon>Mammalia</taxon>
        <taxon>Eutheria</taxon>
        <taxon>Euarchontoglires</taxon>
        <taxon>Primates</taxon>
        <taxon>Haplorrhini</taxon>
        <taxon>Catarrhini</taxon>
        <taxon>Hominidae</taxon>
        <taxon>Pongo</taxon>
    </lineage>
</organism>
<keyword id="KW-0007">Acetylation</keyword>
<keyword id="KW-0963">Cytoplasm</keyword>
<keyword id="KW-0251">Elongation factor</keyword>
<keyword id="KW-0256">Endoplasmic reticulum</keyword>
<keyword id="KW-0385">Hypusine</keyword>
<keyword id="KW-0472">Membrane</keyword>
<keyword id="KW-0539">Nucleus</keyword>
<keyword id="KW-0648">Protein biosynthesis</keyword>
<keyword id="KW-1185">Reference proteome</keyword>
<keyword id="KW-0694">RNA-binding</keyword>
<name>IF5A2_PONAB</name>
<comment type="function">
    <text evidence="1 2 4">Translation factor that promotes translation elongation and termination, particularly upon ribosome stalling at specific amino acid sequence contexts (By similarity). Binds between the exit (E) and peptidyl (P) site of the ribosome and promotes rescue of stalled ribosome: specifically required for efficient translation of polyproline-containing peptides as well as other motifs that stall the ribosome. Acts as a ribosome quality control (RQC) cofactor by joining the RQC complex to facilitate peptidyl transfer during CAT tailing step (By similarity). Also involved in actin dynamics and cell cycle progression, mRNA decay and probably in a pathway involved in stress response and maintenance of cell wall integrity (By similarity).</text>
</comment>
<comment type="subunit">
    <text evidence="2 3">Binds to 80S ribosomes. Actively translating ribosomes show mutually exclusive binding of eIF5a (EIF5A or EIF5A2) and EEF2/eEF2 (By similarity). Interacts with DAPL1; interaction takes place at the polypeptide exit tunnel of hibernating ribosomes and prevents translation (By similarity).</text>
</comment>
<comment type="subcellular location">
    <subcellularLocation>
        <location evidence="2">Cytoplasm</location>
    </subcellularLocation>
    <subcellularLocation>
        <location evidence="2">Nucleus</location>
    </subcellularLocation>
    <subcellularLocation>
        <location evidence="2">Endoplasmic reticulum membrane</location>
        <topology evidence="2">Peripheral membrane protein</topology>
        <orientation evidence="2">Cytoplasmic side</orientation>
    </subcellularLocation>
    <text evidence="2">Hypusine modification promotes the nuclear export and cytoplasmic localization and there was a dynamic shift in the localization from predominantly cytoplasmic to primarily nuclear under apoptotic inducing conditions.</text>
</comment>
<comment type="PTM">
    <text evidence="4">Lys-50 undergoes hypusination, a unique post-translational modification that consists in the addition of a butylamino group from spermidine to lysine side chain and leads to the formation of a hypusine residue. eIF-5As are the only known proteins to undergo this modification, which is essential for their function.</text>
</comment>
<comment type="similarity">
    <text evidence="5">Belongs to the eIF-5A family.</text>
</comment>
<protein>
    <recommendedName>
        <fullName>Eukaryotic translation initiation factor 5A-2</fullName>
        <shortName>eIF-5A-2</shortName>
        <shortName>eIF-5A2</shortName>
    </recommendedName>
    <alternativeName>
        <fullName>Eukaryotic initiation factor 5A isoform 2</fullName>
    </alternativeName>
</protein>
<reference key="1">
    <citation type="submission" date="2004-11" db="EMBL/GenBank/DDBJ databases">
        <authorList>
            <consortium name="The German cDNA consortium"/>
        </authorList>
    </citation>
    <scope>NUCLEOTIDE SEQUENCE [LARGE SCALE MRNA]</scope>
    <source>
        <tissue>Kidney</tissue>
    </source>
</reference>
<feature type="initiator methionine" description="Removed" evidence="4">
    <location>
        <position position="1"/>
    </location>
</feature>
<feature type="chain" id="PRO_0000229762" description="Eukaryotic translation initiation factor 5A-2">
    <location>
        <begin position="2"/>
        <end position="153"/>
    </location>
</feature>
<feature type="modified residue" description="N-acetylalanine" evidence="4">
    <location>
        <position position="2"/>
    </location>
</feature>
<feature type="modified residue" description="Hypusine" evidence="4">
    <location>
        <position position="50"/>
    </location>
</feature>
<evidence type="ECO:0000250" key="1">
    <source>
        <dbReference type="UniProtKB" id="P23301"/>
    </source>
</evidence>
<evidence type="ECO:0000250" key="2">
    <source>
        <dbReference type="UniProtKB" id="P63241"/>
    </source>
</evidence>
<evidence type="ECO:0000250" key="3">
    <source>
        <dbReference type="UniProtKB" id="Q6NX89"/>
    </source>
</evidence>
<evidence type="ECO:0000250" key="4">
    <source>
        <dbReference type="UniProtKB" id="Q9GZV4"/>
    </source>
</evidence>
<evidence type="ECO:0000305" key="5"/>
<sequence length="153" mass="16793">MADEIDFTTGDAGASSTYPMQCSALRKNGFVVLKGRPCKIVEMSTSKTGKHGHAKVHLVGIDIFTGKKYEDICPSTHNMDVPNIKRNDYQLICIQDGYLSLLTETGEVREDLKLPEGELGKEIEGKYNAGEDVQVSVMCAMSEEYAVAIKPCK</sequence>